<accession>Q6SW29</accession>
<accession>D2K3S1</accession>
<protein>
    <recommendedName>
        <fullName>Viral transcription factor IE2</fullName>
        <shortName>IE2</shortName>
    </recommendedName>
    <alternativeName>
        <fullName>Protein UL122</fullName>
    </alternativeName>
</protein>
<keyword id="KW-0010">Activator</keyword>
<keyword id="KW-0238">DNA-binding</keyword>
<keyword id="KW-0244">Early protein</keyword>
<keyword id="KW-1077">G0/G1 host cell cycle checkpoint dysregulation by virus</keyword>
<keyword id="KW-1078">G1/S host cell cycle checkpoint dysregulation by virus</keyword>
<keyword id="KW-1048">Host nucleus</keyword>
<keyword id="KW-0945">Host-virus interaction</keyword>
<keyword id="KW-1017">Isopeptide bond</keyword>
<keyword id="KW-0479">Metal-binding</keyword>
<keyword id="KW-1121">Modulation of host cell cycle by virus</keyword>
<keyword id="KW-0597">Phosphoprotein</keyword>
<keyword id="KW-1185">Reference proteome</keyword>
<keyword id="KW-0804">Transcription</keyword>
<keyword id="KW-0805">Transcription regulation</keyword>
<keyword id="KW-0832">Ubl conjugation</keyword>
<sequence length="580" mass="63097">MESSAKRKMDPDNPDEGPSSKVPRPETPVTKATTFLQTMLRKEVNSQLSLGDPLFPELAEESLKTFEQVTEDCNENPEKDVLTELGDILAQAVNHAGIDSSSTGPTLTTHSCSVSSAPLNKPTPTSVAVTNTPLPGASATPELSPRKKPRKTTRPFKVIIKPPVPPAPIMLPLIKQEDIKPEPDFTIQYRNKIIDTAGCIVISDSEEEQGEEVETRGATASSPSTGSGTPRVTSPTHPLSQMNHPPLPDPLGRPDEDSSSSSSSSCSSASDSESESEEMKCSSGGGASVTSSHHGRGGFGGAASSSLLSCGHQSSGGASTGPRKKKSKRISELDNEKVRNIMKDKNTPFCTPNVQTRRGRVKIDEVSRMFRHTNRSLEYKNLPFMIPSMHQVLEEAIKVCKTMQVNNKGIQIIYTRNHEVKNEVDQVRCRLGSMCNLALSTPFLMEHTMPVTHPPDVAQRTADACNDGVKAVWNLKELHTHQLCPRSSDYRNMIIHAATPVDLLGALNLCLPLMQKFPKQVMVRIFSTNQGGFMLPIYETAAKAYAVGQFEKPTETPPEDLDTLSLAIEAAIQDLRNKSQ</sequence>
<comment type="function">
    <text evidence="3">Stimulates viral early and late gene expression and thus play a crucial role in the regulation of productive infection. Selectively drives host RNA Pol II transcription initiation at a subset of viral early-late and late promoters without substantially affecting Pol II transcription of expressed host genes. Mechanistically, forms a repressive complex at the major immediate-early promoter region involving direct association with host nucleosomes and TBP. Concerning activation, stimulates transcription by binding nearby, but not within, core promoter regions. In addition, activates quiescent cells to reenter the cell cycle and up-regulates several E2F-responsive genes, which are responsible for pushing the cell into S phase. In S-phase, inhibits cellular DNA synthesis and blocks further cell cycle progression.</text>
</comment>
<comment type="subunit">
    <text evidence="3">Interacts with host SUMO-modified form of TATA-binding protein (TBP)-associated factor 12/TAF12 in a SIM-dependent manner; this interaction increases the transactivation activity of IE2. Interacts with host CHAF1A. Interacts with several components of the host transcriptional machinery including TBP, TF2B and CREB1. Interacts with host DNA replication licensing factor MCM3. Interacts with host PLSCR1; this interaction inhibits IE2 transactivating activity.</text>
</comment>
<comment type="subcellular location">
    <subcellularLocation>
        <location evidence="3">Host nucleus</location>
    </subcellularLocation>
    <text evidence="3">Colocalizes with host PML-associated nuclear bodies.</text>
</comment>
<comment type="domain">
    <text evidence="1">The SUMO-interacting motif (SIM) is required for efficient transactivation function.</text>
</comment>
<comment type="PTM">
    <text evidence="2">Phosphorylated by host CK2 at Ser-203 and Ser-205; leading to enhanced SUMOylation.</text>
</comment>
<comment type="PTM">
    <text evidence="2">SUMOylated; SUMOylation is enhanced when IE2 is phosphorylated by host CK2. The sumoylation is necessary for efficient replication of the virus and thus for the function of this viral transcription factor.</text>
</comment>
<comment type="similarity">
    <text evidence="5">Belongs to the HHV-5 IE2 protein family.</text>
</comment>
<gene>
    <name type="primary">UL122</name>
</gene>
<proteinExistence type="inferred from homology"/>
<reference key="1">
    <citation type="journal article" date="2004" name="J. Gen. Virol.">
        <title>Genetic content of wild-type human cytomegalovirus.</title>
        <authorList>
            <person name="Dolan A."/>
            <person name="Cunningham C."/>
            <person name="Hector R.D."/>
            <person name="Hassan-Walker A.F."/>
            <person name="Lee L."/>
            <person name="Addison C."/>
            <person name="Dargan D.J."/>
            <person name="McGeoch D.J."/>
            <person name="Gatherer D."/>
            <person name="Emery V.C."/>
            <person name="Griffiths P.D."/>
            <person name="Sinzger C."/>
            <person name="McSharry B.P."/>
            <person name="Wilkinson G.W.G."/>
            <person name="Davison A.J."/>
        </authorList>
    </citation>
    <scope>NUCLEOTIDE SEQUENCE [LARGE SCALE GENOMIC DNA]</scope>
</reference>
<evidence type="ECO:0000250" key="1"/>
<evidence type="ECO:0000250" key="2">
    <source>
        <dbReference type="UniProtKB" id="P19893"/>
    </source>
</evidence>
<evidence type="ECO:0000250" key="3">
    <source>
        <dbReference type="UniProtKB" id="Q6SWP7"/>
    </source>
</evidence>
<evidence type="ECO:0000256" key="4">
    <source>
        <dbReference type="SAM" id="MobiDB-lite"/>
    </source>
</evidence>
<evidence type="ECO:0000305" key="5"/>
<name>VIE2_HCMVM</name>
<organismHost>
    <name type="scientific">Homo sapiens</name>
    <name type="common">Human</name>
    <dbReference type="NCBI Taxonomy" id="9606"/>
</organismHost>
<feature type="chain" id="PRO_0000417856" description="Viral transcription factor IE2">
    <location>
        <begin position="1"/>
        <end position="580"/>
    </location>
</feature>
<feature type="region of interest" description="Disordered" evidence="4">
    <location>
        <begin position="1"/>
        <end position="30"/>
    </location>
</feature>
<feature type="region of interest" description="Disordered" evidence="4">
    <location>
        <begin position="99"/>
        <end position="161"/>
    </location>
</feature>
<feature type="region of interest" description="Non-covalent SUMO1 binding region (SIM)" evidence="1">
    <location>
        <begin position="200"/>
        <end position="208"/>
    </location>
</feature>
<feature type="region of interest" description="Disordered" evidence="4">
    <location>
        <begin position="206"/>
        <end position="336"/>
    </location>
</feature>
<feature type="short sequence motif" description="SUMO-interacting motif 1/SIM1" evidence="2">
    <location>
        <begin position="199"/>
        <end position="202"/>
    </location>
</feature>
<feature type="short sequence motif" description="SUMO-interacting motif 1/SIM2" evidence="2">
    <location>
        <begin position="410"/>
        <end position="413"/>
    </location>
</feature>
<feature type="short sequence motif" description="SUMO-interacting motif 1/SIM3" evidence="2">
    <location>
        <begin position="501"/>
        <end position="504"/>
    </location>
</feature>
<feature type="compositionally biased region" description="Basic and acidic residues" evidence="4">
    <location>
        <begin position="1"/>
        <end position="11"/>
    </location>
</feature>
<feature type="compositionally biased region" description="Polar residues" evidence="4">
    <location>
        <begin position="99"/>
        <end position="133"/>
    </location>
</feature>
<feature type="compositionally biased region" description="Low complexity" evidence="4">
    <location>
        <begin position="216"/>
        <end position="236"/>
    </location>
</feature>
<feature type="compositionally biased region" description="Low complexity" evidence="4">
    <location>
        <begin position="259"/>
        <end position="271"/>
    </location>
</feature>
<feature type="compositionally biased region" description="Low complexity" evidence="4">
    <location>
        <begin position="302"/>
        <end position="317"/>
    </location>
</feature>
<feature type="modified residue" description="Phosphoserine" evidence="2">
    <location>
        <position position="203"/>
    </location>
</feature>
<feature type="modified residue" description="Phosphoserine" evidence="2">
    <location>
        <position position="205"/>
    </location>
</feature>
<feature type="cross-link" description="Glycyl lysine isopeptide (Lys-Gly) (interchain with G-Cter in SUMO)" evidence="1">
    <location>
        <position position="175"/>
    </location>
</feature>
<feature type="cross-link" description="Glycyl lysine isopeptide (Lys-Gly) (interchain with G-Cter in SUMO)" evidence="1">
    <location>
        <position position="180"/>
    </location>
</feature>
<organism>
    <name type="scientific">Human cytomegalovirus (strain Merlin)</name>
    <name type="common">HHV-5</name>
    <name type="synonym">Human herpesvirus 5</name>
    <dbReference type="NCBI Taxonomy" id="295027"/>
    <lineage>
        <taxon>Viruses</taxon>
        <taxon>Duplodnaviria</taxon>
        <taxon>Heunggongvirae</taxon>
        <taxon>Peploviricota</taxon>
        <taxon>Herviviricetes</taxon>
        <taxon>Herpesvirales</taxon>
        <taxon>Orthoherpesviridae</taxon>
        <taxon>Betaherpesvirinae</taxon>
        <taxon>Cytomegalovirus</taxon>
        <taxon>Cytomegalovirus humanbeta5</taxon>
        <taxon>Human cytomegalovirus</taxon>
    </lineage>
</organism>
<dbReference type="EMBL" id="AY446894">
    <property type="protein sequence ID" value="AAR31665.1"/>
    <property type="molecule type" value="Genomic_DNA"/>
</dbReference>
<dbReference type="RefSeq" id="YP_081561.1">
    <property type="nucleotide sequence ID" value="NC_006273.2"/>
</dbReference>
<dbReference type="SMR" id="Q6SW29"/>
<dbReference type="BioGRID" id="1678116">
    <property type="interactions" value="10"/>
</dbReference>
<dbReference type="IntAct" id="Q6SW29">
    <property type="interactions" value="8"/>
</dbReference>
<dbReference type="GeneID" id="3077563"/>
<dbReference type="KEGG" id="vg:3077563"/>
<dbReference type="Reactome" id="R-HSA-9609690">
    <property type="pathway name" value="HCMV Early Events"/>
</dbReference>
<dbReference type="Reactome" id="R-HSA-9610379">
    <property type="pathway name" value="HCMV Late Events"/>
</dbReference>
<dbReference type="Proteomes" id="UP000000938">
    <property type="component" value="Segment"/>
</dbReference>
<dbReference type="GO" id="GO:0042025">
    <property type="term" value="C:host cell nucleus"/>
    <property type="evidence" value="ECO:0007669"/>
    <property type="project" value="UniProtKB-SubCell"/>
</dbReference>
<dbReference type="GO" id="GO:0003677">
    <property type="term" value="F:DNA binding"/>
    <property type="evidence" value="ECO:0007669"/>
    <property type="project" value="UniProtKB-KW"/>
</dbReference>
<dbReference type="GO" id="GO:0046872">
    <property type="term" value="F:metal ion binding"/>
    <property type="evidence" value="ECO:0007669"/>
    <property type="project" value="UniProtKB-KW"/>
</dbReference>
<dbReference type="GO" id="GO:0039695">
    <property type="term" value="P:DNA-templated viral transcription"/>
    <property type="evidence" value="ECO:0000250"/>
    <property type="project" value="UniProtKB"/>
</dbReference>
<dbReference type="GO" id="GO:0006355">
    <property type="term" value="P:regulation of DNA-templated transcription"/>
    <property type="evidence" value="ECO:0007669"/>
    <property type="project" value="InterPro"/>
</dbReference>
<dbReference type="GO" id="GO:0039646">
    <property type="term" value="P:symbiont-mediated perturbation of host cell cycle G0/G1 transition checkpoint"/>
    <property type="evidence" value="ECO:0007669"/>
    <property type="project" value="UniProtKB-KW"/>
</dbReference>
<dbReference type="GO" id="GO:0039645">
    <property type="term" value="P:symbiont-mediated perturbation of host cell cycle G1/S transition checkpoint"/>
    <property type="evidence" value="ECO:0007669"/>
    <property type="project" value="UniProtKB-KW"/>
</dbReference>
<dbReference type="InterPro" id="IPR010855">
    <property type="entry name" value="Cytomega_IE1/IE2"/>
</dbReference>
<dbReference type="InterPro" id="IPR005028">
    <property type="entry name" value="Herpes_IE2_3"/>
</dbReference>
<dbReference type="Pfam" id="PF07340">
    <property type="entry name" value="Herpes_IE1"/>
    <property type="match status" value="1"/>
</dbReference>
<dbReference type="Pfam" id="PF03361">
    <property type="entry name" value="Herpes_IE2_3"/>
    <property type="match status" value="1"/>
</dbReference>